<evidence type="ECO:0000255" key="1">
    <source>
        <dbReference type="HAMAP-Rule" id="MF_00033"/>
    </source>
</evidence>
<sequence length="343" mass="38533">MDIILATGGTGGHIFPAIALAKALKTQGYNCILFTDKKTNKNTDIESYTLPLRRPSSNKFKFFLFLIYSSMLALYQVRKLKPKSVIGFGSYASFPTLLAARVLSIPIILHEQNTVLGRVNRFFFKSAKLIATSFPETKYAEGNKCIFTGNFVDIKAQSHSSTEKILNILVIAGSQGANFFDDVVSSVICDLPIKMKKKIRVTQQCTKKNVNKVKSLYKSEKIDCELSEFFDDMENRLANAHLVISRAGATSIAEITLARRSAIYIPYPYSKDNHQFYNAKYIEDSRAAIIVKQNSEAKKNLTEVLFDLLNNSQKLRDMTNSTEKTGIKNGTTEFVKVIVHRFS</sequence>
<organism>
    <name type="scientific">Wolbachia sp. subsp. Drosophila simulans (strain wRi)</name>
    <dbReference type="NCBI Taxonomy" id="66084"/>
    <lineage>
        <taxon>Bacteria</taxon>
        <taxon>Pseudomonadati</taxon>
        <taxon>Pseudomonadota</taxon>
        <taxon>Alphaproteobacteria</taxon>
        <taxon>Rickettsiales</taxon>
        <taxon>Anaplasmataceae</taxon>
        <taxon>Wolbachieae</taxon>
        <taxon>Wolbachia</taxon>
    </lineage>
</organism>
<dbReference type="EC" id="2.4.1.227" evidence="1"/>
<dbReference type="EMBL" id="CP001391">
    <property type="protein sequence ID" value="ACN95259.1"/>
    <property type="molecule type" value="Genomic_DNA"/>
</dbReference>
<dbReference type="RefSeq" id="WP_007549072.1">
    <property type="nucleotide sequence ID" value="NZ_MKIF01000197.1"/>
</dbReference>
<dbReference type="SMR" id="C0R2W7"/>
<dbReference type="STRING" id="66084.WRi_004740"/>
<dbReference type="CAZy" id="GT28">
    <property type="family name" value="Glycosyltransferase Family 28"/>
</dbReference>
<dbReference type="GeneID" id="70035814"/>
<dbReference type="KEGG" id="wri:WRi_004740"/>
<dbReference type="HOGENOM" id="CLU_037404_2_1_5"/>
<dbReference type="UniPathway" id="UPA00219"/>
<dbReference type="Proteomes" id="UP000001293">
    <property type="component" value="Chromosome"/>
</dbReference>
<dbReference type="GO" id="GO:0005886">
    <property type="term" value="C:plasma membrane"/>
    <property type="evidence" value="ECO:0007669"/>
    <property type="project" value="UniProtKB-SubCell"/>
</dbReference>
<dbReference type="GO" id="GO:0051991">
    <property type="term" value="F:UDP-N-acetyl-D-glucosamine:N-acetylmuramoyl-L-alanyl-D-glutamyl-meso-2,6-diaminopimelyl-D-alanyl-D-alanine-diphosphoundecaprenol 4-beta-N-acetylglucosaminlytransferase activity"/>
    <property type="evidence" value="ECO:0007669"/>
    <property type="project" value="RHEA"/>
</dbReference>
<dbReference type="GO" id="GO:0050511">
    <property type="term" value="F:undecaprenyldiphospho-muramoylpentapeptide beta-N-acetylglucosaminyltransferase activity"/>
    <property type="evidence" value="ECO:0007669"/>
    <property type="project" value="UniProtKB-UniRule"/>
</dbReference>
<dbReference type="GO" id="GO:0005975">
    <property type="term" value="P:carbohydrate metabolic process"/>
    <property type="evidence" value="ECO:0007669"/>
    <property type="project" value="InterPro"/>
</dbReference>
<dbReference type="GO" id="GO:0051301">
    <property type="term" value="P:cell division"/>
    <property type="evidence" value="ECO:0007669"/>
    <property type="project" value="UniProtKB-KW"/>
</dbReference>
<dbReference type="GO" id="GO:0071555">
    <property type="term" value="P:cell wall organization"/>
    <property type="evidence" value="ECO:0007669"/>
    <property type="project" value="UniProtKB-KW"/>
</dbReference>
<dbReference type="GO" id="GO:0030259">
    <property type="term" value="P:lipid glycosylation"/>
    <property type="evidence" value="ECO:0007669"/>
    <property type="project" value="UniProtKB-UniRule"/>
</dbReference>
<dbReference type="GO" id="GO:0009252">
    <property type="term" value="P:peptidoglycan biosynthetic process"/>
    <property type="evidence" value="ECO:0007669"/>
    <property type="project" value="UniProtKB-UniRule"/>
</dbReference>
<dbReference type="GO" id="GO:0008360">
    <property type="term" value="P:regulation of cell shape"/>
    <property type="evidence" value="ECO:0007669"/>
    <property type="project" value="UniProtKB-KW"/>
</dbReference>
<dbReference type="CDD" id="cd03785">
    <property type="entry name" value="GT28_MurG"/>
    <property type="match status" value="1"/>
</dbReference>
<dbReference type="Gene3D" id="3.40.50.2000">
    <property type="entry name" value="Glycogen Phosphorylase B"/>
    <property type="match status" value="2"/>
</dbReference>
<dbReference type="HAMAP" id="MF_00033">
    <property type="entry name" value="MurG"/>
    <property type="match status" value="1"/>
</dbReference>
<dbReference type="InterPro" id="IPR006009">
    <property type="entry name" value="GlcNAc_MurG"/>
</dbReference>
<dbReference type="InterPro" id="IPR007235">
    <property type="entry name" value="Glyco_trans_28_C"/>
</dbReference>
<dbReference type="InterPro" id="IPR004276">
    <property type="entry name" value="GlycoTrans_28_N"/>
</dbReference>
<dbReference type="NCBIfam" id="TIGR01133">
    <property type="entry name" value="murG"/>
    <property type="match status" value="1"/>
</dbReference>
<dbReference type="PANTHER" id="PTHR21015:SF22">
    <property type="entry name" value="GLYCOSYLTRANSFERASE"/>
    <property type="match status" value="1"/>
</dbReference>
<dbReference type="PANTHER" id="PTHR21015">
    <property type="entry name" value="UDP-N-ACETYLGLUCOSAMINE--N-ACETYLMURAMYL-(PENTAPEPTIDE) PYROPHOSPHORYL-UNDECAPRENOL N-ACETYLGLUCOSAMINE TRANSFERASE 1"/>
    <property type="match status" value="1"/>
</dbReference>
<dbReference type="Pfam" id="PF04101">
    <property type="entry name" value="Glyco_tran_28_C"/>
    <property type="match status" value="1"/>
</dbReference>
<dbReference type="Pfam" id="PF03033">
    <property type="entry name" value="Glyco_transf_28"/>
    <property type="match status" value="1"/>
</dbReference>
<dbReference type="SUPFAM" id="SSF53756">
    <property type="entry name" value="UDP-Glycosyltransferase/glycogen phosphorylase"/>
    <property type="match status" value="1"/>
</dbReference>
<keyword id="KW-0131">Cell cycle</keyword>
<keyword id="KW-0132">Cell division</keyword>
<keyword id="KW-1003">Cell membrane</keyword>
<keyword id="KW-0133">Cell shape</keyword>
<keyword id="KW-0961">Cell wall biogenesis/degradation</keyword>
<keyword id="KW-0328">Glycosyltransferase</keyword>
<keyword id="KW-0472">Membrane</keyword>
<keyword id="KW-0573">Peptidoglycan synthesis</keyword>
<keyword id="KW-0808">Transferase</keyword>
<comment type="function">
    <text evidence="1">Cell wall formation. Catalyzes the transfer of a GlcNAc subunit on undecaprenyl-pyrophosphoryl-MurNAc-pentapeptide (lipid intermediate I) to form undecaprenyl-pyrophosphoryl-MurNAc-(pentapeptide)GlcNAc (lipid intermediate II).</text>
</comment>
<comment type="catalytic activity">
    <reaction evidence="1">
        <text>di-trans,octa-cis-undecaprenyl diphospho-N-acetyl-alpha-D-muramoyl-L-alanyl-D-glutamyl-meso-2,6-diaminopimeloyl-D-alanyl-D-alanine + UDP-N-acetyl-alpha-D-glucosamine = di-trans,octa-cis-undecaprenyl diphospho-[N-acetyl-alpha-D-glucosaminyl-(1-&gt;4)]-N-acetyl-alpha-D-muramoyl-L-alanyl-D-glutamyl-meso-2,6-diaminopimeloyl-D-alanyl-D-alanine + UDP + H(+)</text>
        <dbReference type="Rhea" id="RHEA:31227"/>
        <dbReference type="ChEBI" id="CHEBI:15378"/>
        <dbReference type="ChEBI" id="CHEBI:57705"/>
        <dbReference type="ChEBI" id="CHEBI:58223"/>
        <dbReference type="ChEBI" id="CHEBI:61387"/>
        <dbReference type="ChEBI" id="CHEBI:61388"/>
        <dbReference type="EC" id="2.4.1.227"/>
    </reaction>
</comment>
<comment type="pathway">
    <text evidence="1">Cell wall biogenesis; peptidoglycan biosynthesis.</text>
</comment>
<comment type="subcellular location">
    <subcellularLocation>
        <location evidence="1">Cell membrane</location>
        <topology evidence="1">Peripheral membrane protein</topology>
        <orientation evidence="1">Cytoplasmic side</orientation>
    </subcellularLocation>
</comment>
<comment type="similarity">
    <text evidence="1">Belongs to the glycosyltransferase 28 family. MurG subfamily.</text>
</comment>
<feature type="chain" id="PRO_1000117039" description="UDP-N-acetylglucosamine--N-acetylmuramyl-(pentapeptide) pyrophosphoryl-undecaprenol N-acetylglucosamine transferase">
    <location>
        <begin position="1"/>
        <end position="343"/>
    </location>
</feature>
<feature type="binding site" evidence="1">
    <location>
        <begin position="10"/>
        <end position="12"/>
    </location>
    <ligand>
        <name>UDP-N-acetyl-alpha-D-glucosamine</name>
        <dbReference type="ChEBI" id="CHEBI:57705"/>
    </ligand>
</feature>
<feature type="binding site" evidence="1">
    <location>
        <position position="113"/>
    </location>
    <ligand>
        <name>UDP-N-acetyl-alpha-D-glucosamine</name>
        <dbReference type="ChEBI" id="CHEBI:57705"/>
    </ligand>
</feature>
<feature type="binding site" evidence="1">
    <location>
        <position position="174"/>
    </location>
    <ligand>
        <name>UDP-N-acetyl-alpha-D-glucosamine</name>
        <dbReference type="ChEBI" id="CHEBI:57705"/>
    </ligand>
</feature>
<feature type="binding site" evidence="1">
    <location>
        <position position="275"/>
    </location>
    <ligand>
        <name>UDP-N-acetyl-alpha-D-glucosamine</name>
        <dbReference type="ChEBI" id="CHEBI:57705"/>
    </ligand>
</feature>
<accession>C0R2W7</accession>
<protein>
    <recommendedName>
        <fullName evidence="1">UDP-N-acetylglucosamine--N-acetylmuramyl-(pentapeptide) pyrophosphoryl-undecaprenol N-acetylglucosamine transferase</fullName>
        <ecNumber evidence="1">2.4.1.227</ecNumber>
    </recommendedName>
    <alternativeName>
        <fullName evidence="1">Undecaprenyl-PP-MurNAc-pentapeptide-UDPGlcNAc GlcNAc transferase</fullName>
    </alternativeName>
</protein>
<name>MURG_WOLWR</name>
<proteinExistence type="inferred from homology"/>
<gene>
    <name evidence="1" type="primary">murG</name>
    <name type="ordered locus">WRi_004740</name>
</gene>
<reference key="1">
    <citation type="journal article" date="2009" name="Proc. Natl. Acad. Sci. U.S.A.">
        <title>The mosaic genome structure of the Wolbachia wRi strain infecting Drosophila simulans.</title>
        <authorList>
            <person name="Klasson L."/>
            <person name="Westberg J."/>
            <person name="Sapountzis P."/>
            <person name="Naeslund K."/>
            <person name="Lutnaes Y."/>
            <person name="Darby A.C."/>
            <person name="Veneti Z."/>
            <person name="Chen L."/>
            <person name="Braig H.R."/>
            <person name="Garrett R."/>
            <person name="Bourtzis K."/>
            <person name="Andersson S.G."/>
        </authorList>
    </citation>
    <scope>NUCLEOTIDE SEQUENCE [LARGE SCALE GENOMIC DNA]</scope>
    <source>
        <strain>wRi</strain>
    </source>
</reference>